<feature type="initiator methionine" description="Removed" evidence="7 16">
    <location>
        <position position="1"/>
    </location>
</feature>
<feature type="chain" id="PRO_0000158606" description="Ribosomal RNA small subunit methyltransferase NEP1">
    <location>
        <begin position="2"/>
        <end position="244"/>
    </location>
</feature>
<feature type="region of interest" description="Disordered" evidence="2">
    <location>
        <begin position="1"/>
        <end position="34"/>
    </location>
</feature>
<feature type="binding site" evidence="1">
    <location>
        <position position="176"/>
    </location>
    <ligand>
        <name>S-adenosyl-L-methionine</name>
        <dbReference type="ChEBI" id="CHEBI:59789"/>
    </ligand>
</feature>
<feature type="binding site" evidence="1">
    <location>
        <position position="201"/>
    </location>
    <ligand>
        <name>S-adenosyl-L-methionine</name>
        <dbReference type="ChEBI" id="CHEBI:59789"/>
    </ligand>
</feature>
<feature type="binding site" evidence="1">
    <location>
        <position position="206"/>
    </location>
    <ligand>
        <name>S-adenosyl-L-methionine</name>
        <dbReference type="ChEBI" id="CHEBI:59789"/>
    </ligand>
</feature>
<feature type="binding site" evidence="1">
    <location>
        <begin position="219"/>
        <end position="224"/>
    </location>
    <ligand>
        <name>S-adenosyl-L-methionine</name>
        <dbReference type="ChEBI" id="CHEBI:59789"/>
    </ligand>
</feature>
<feature type="site" description="Interaction with substrate rRNA" evidence="1">
    <location>
        <position position="84"/>
    </location>
</feature>
<feature type="site" description="Stabilizes Arg-84" evidence="1">
    <location>
        <position position="86"/>
    </location>
</feature>
<feature type="site" description="Interaction with substrate rRNA" evidence="1">
    <location>
        <position position="125"/>
    </location>
</feature>
<feature type="site" description="Interaction with substrate rRNA" evidence="1">
    <location>
        <position position="128"/>
    </location>
</feature>
<feature type="site" description="Interaction with substrate rRNA" evidence="1">
    <location>
        <position position="132"/>
    </location>
</feature>
<feature type="modified residue" description="N-acetylalanine" evidence="7 16">
    <location>
        <position position="2"/>
    </location>
</feature>
<feature type="modified residue" description="Phosphoserine" evidence="17">
    <location>
        <position position="5"/>
    </location>
</feature>
<feature type="modified residue" description="Phosphoserine" evidence="17">
    <location>
        <position position="14"/>
    </location>
</feature>
<feature type="sequence variant" id="VAR_050237" description="In dbSNP:rs11064480.">
    <original>A</original>
    <variation>G</variation>
    <location>
        <position position="34"/>
    </location>
</feature>
<feature type="sequence variant" id="VAR_062480" description="In BWCNS; studies in fibroblasts show a dramatically reduced level of EMG1 protein in a BWCNS-affected patient compared to normal fibroblasts although patient fibroblasts do not have complete EMG1 deficiency; the mutation increases dimerization of EMG1 subunits suggesting that aggregation of EMG1 leads to reduced levels of the protein; dbSNP:rs74435397." evidence="4">
    <original>D</original>
    <variation>G</variation>
    <location>
        <position position="86"/>
    </location>
</feature>
<feature type="strand" evidence="18">
    <location>
        <begin position="42"/>
        <end position="50"/>
    </location>
</feature>
<feature type="strand" evidence="18">
    <location>
        <begin position="54"/>
        <end position="57"/>
    </location>
</feature>
<feature type="strand" evidence="18">
    <location>
        <begin position="60"/>
        <end position="63"/>
    </location>
</feature>
<feature type="turn" evidence="18">
    <location>
        <begin position="66"/>
        <end position="68"/>
    </location>
</feature>
<feature type="helix" evidence="18">
    <location>
        <begin position="75"/>
        <end position="77"/>
    </location>
</feature>
<feature type="helix" evidence="18">
    <location>
        <begin position="80"/>
        <end position="82"/>
    </location>
</feature>
<feature type="helix" evidence="18">
    <location>
        <begin position="85"/>
        <end position="97"/>
    </location>
</feature>
<feature type="helix" evidence="18">
    <location>
        <begin position="99"/>
        <end position="102"/>
    </location>
</feature>
<feature type="strand" evidence="18">
    <location>
        <begin position="106"/>
        <end position="112"/>
    </location>
</feature>
<feature type="strand" evidence="18">
    <location>
        <begin position="117"/>
        <end position="120"/>
    </location>
</feature>
<feature type="helix" evidence="18">
    <location>
        <begin position="130"/>
        <end position="143"/>
    </location>
</feature>
<feature type="strand" evidence="18">
    <location>
        <begin position="144"/>
        <end position="147"/>
    </location>
</feature>
<feature type="strand" evidence="18">
    <location>
        <begin position="154"/>
        <end position="159"/>
    </location>
</feature>
<feature type="helix" evidence="18">
    <location>
        <begin position="163"/>
        <end position="166"/>
    </location>
</feature>
<feature type="strand" evidence="18">
    <location>
        <begin position="172"/>
        <end position="176"/>
    </location>
</feature>
<feature type="strand" evidence="18">
    <location>
        <begin position="181"/>
        <end position="183"/>
    </location>
</feature>
<feature type="helix" evidence="18">
    <location>
        <begin position="186"/>
        <end position="189"/>
    </location>
</feature>
<feature type="strand" evidence="18">
    <location>
        <begin position="192"/>
        <end position="201"/>
    </location>
</feature>
<feature type="strand" evidence="18">
    <location>
        <begin position="203"/>
        <end position="205"/>
    </location>
</feature>
<feature type="strand" evidence="18">
    <location>
        <begin position="214"/>
        <end position="218"/>
    </location>
</feature>
<feature type="helix" evidence="18">
    <location>
        <begin position="226"/>
        <end position="241"/>
    </location>
</feature>
<keyword id="KW-0002">3D-structure</keyword>
<keyword id="KW-0007">Acetylation</keyword>
<keyword id="KW-0903">Direct protein sequencing</keyword>
<keyword id="KW-0225">Disease variant</keyword>
<keyword id="KW-0489">Methyltransferase</keyword>
<keyword id="KW-0539">Nucleus</keyword>
<keyword id="KW-0597">Phosphoprotein</keyword>
<keyword id="KW-1267">Proteomics identification</keyword>
<keyword id="KW-1185">Reference proteome</keyword>
<keyword id="KW-0690">Ribosome biogenesis</keyword>
<keyword id="KW-0694">RNA-binding</keyword>
<keyword id="KW-0698">rRNA processing</keyword>
<keyword id="KW-0699">rRNA-binding</keyword>
<keyword id="KW-0949">S-adenosyl-L-methionine</keyword>
<keyword id="KW-0808">Transferase</keyword>
<proteinExistence type="evidence at protein level"/>
<protein>
    <recommendedName>
        <fullName evidence="12">Ribosomal RNA small subunit methyltransferase NEP1</fullName>
        <ecNumber evidence="5">2.1.1.-</ecNumber>
    </recommendedName>
    <alternativeName>
        <fullName evidence="9">18S rRNA (pseudouridine(1248)-N1)-methyltransferase</fullName>
    </alternativeName>
    <alternativeName>
        <fullName evidence="9">18S rRNA Psi1248 methyltransferase</fullName>
    </alternativeName>
    <alternativeName>
        <fullName evidence="1">Nucleolar protein EMG1 homolog</fullName>
    </alternativeName>
    <alternativeName>
        <fullName evidence="10">Protein C2f</fullName>
    </alternativeName>
    <alternativeName>
        <fullName evidence="9">Ribosome biogenesis protein NEP1</fullName>
    </alternativeName>
</protein>
<comment type="function">
    <text evidence="1 5 6">S-adenosyl-L-methionine-dependent pseudouridine N(1)-methyltransferase that methylates pseudouridine at position 1248 (Psi1248) in 18S rRNA. Involved the biosynthesis of the hypermodified N1-methyl-N3-(3-amino-3-carboxypropyl) pseudouridine (m1acp3-Psi) conserved in eukaryotic 18S rRNA. Is not able to methylate uridine at this position (PubMed:20047967). Also has an essential role in 40S ribosomal subunit biogenesis independent on its methyltransferase activity, facilitating the incorporation of ribosomal protein S19 during the formation of pre-ribosomes (By similarity). Part of the small subunit (SSU) processome, first precursor of the small eukaryotic ribosomal subunit. During the assembly of the SSU processome in the nucleolus, many ribosome biogenesis factors, an RNA chaperone and ribosomal proteins associate with the nascent pre-rRNA and work in concert to generate RNA folding, modifications, rearrangements and cleavage as well as targeted degradation of pre-ribosomal RNA by the RNA exosome (PubMed:34516797).</text>
</comment>
<comment type="catalytic activity">
    <reaction evidence="5">
        <text>pseudouridine(1248) in human 18S rRNA + S-adenosyl-L-methionine = N(1)-methylpseudouridine(1248) in human 18S rRNA + S-adenosyl-L-homocysteine + H(+)</text>
        <dbReference type="Rhea" id="RHEA:46712"/>
        <dbReference type="Rhea" id="RHEA-COMP:11638"/>
        <dbReference type="Rhea" id="RHEA-COMP:11639"/>
        <dbReference type="ChEBI" id="CHEBI:15378"/>
        <dbReference type="ChEBI" id="CHEBI:57856"/>
        <dbReference type="ChEBI" id="CHEBI:59789"/>
        <dbReference type="ChEBI" id="CHEBI:65314"/>
        <dbReference type="ChEBI" id="CHEBI:74890"/>
    </reaction>
</comment>
<comment type="subunit">
    <text evidence="1 6">Homodimer. Part of the small subunit (SSU) processome, composed of more than 70 proteins and the RNA chaperone small nucleolar RNA (snoRNA) U3 (PubMed:34516797).</text>
</comment>
<comment type="interaction">
    <interactant intactId="EBI-718638">
        <id>Q92979</id>
    </interactant>
    <interactant intactId="EBI-718638">
        <id>Q92979</id>
        <label>EMG1</label>
    </interactant>
    <organismsDiffer>false</organismsDiffer>
    <experiments>3</experiments>
</comment>
<comment type="interaction">
    <interactant intactId="EBI-718638">
        <id>Q92979</id>
    </interactant>
    <interactant intactId="EBI-3918847">
        <id>Q9H2F3</id>
        <label>HSD3B7</label>
    </interactant>
    <organismsDiffer>false</organismsDiffer>
    <experiments>3</experiments>
</comment>
<comment type="interaction">
    <interactant intactId="EBI-718638">
        <id>Q92979</id>
    </interactant>
    <interactant intactId="EBI-1210580">
        <id>Q9H5H4</id>
        <label>ZNF768</label>
    </interactant>
    <organismsDiffer>false</organismsDiffer>
    <experiments>3</experiments>
</comment>
<comment type="subcellular location">
    <subcellularLocation>
        <location evidence="3 6">Nucleus</location>
        <location evidence="3 6">Nucleolus</location>
    </subcellularLocation>
</comment>
<comment type="disease" evidence="4">
    <disease id="DI-02492">
        <name>Bowen-Conradi syndrome</name>
        <acronym>BWCNS</acronym>
        <description>A combination of malformations characterized in newborns by low birth weight, microcephaly, mild joint restriction, a prominent nose, micrognathia, fifth finger clinodactyly, and 'rocker-bottom' feet. The syndrome is transmitted as an autosomal recessive trait. The prognosis is poor, with all infants dying within the first few months of life.</description>
        <dbReference type="MIM" id="211180"/>
    </disease>
    <text>The disease is caused by variants affecting the gene represented in this entry.</text>
</comment>
<comment type="similarity">
    <text evidence="11">Belongs to the class IV-like SAM-binding methyltransferase superfamily. RNA methyltransferase NEP1 family.</text>
</comment>
<comment type="sequence caution" evidence="11">
    <conflict type="erroneous initiation">
        <sequence resource="EMBL-CDS" id="AAB51325"/>
    </conflict>
</comment>
<evidence type="ECO:0000250" key="1">
    <source>
        <dbReference type="UniProtKB" id="Q06287"/>
    </source>
</evidence>
<evidence type="ECO:0000256" key="2">
    <source>
        <dbReference type="SAM" id="MobiDB-lite"/>
    </source>
</evidence>
<evidence type="ECO:0000269" key="3">
    <source>
    </source>
</evidence>
<evidence type="ECO:0000269" key="4">
    <source>
    </source>
</evidence>
<evidence type="ECO:0000269" key="5">
    <source>
    </source>
</evidence>
<evidence type="ECO:0000269" key="6">
    <source>
    </source>
</evidence>
<evidence type="ECO:0000269" key="7">
    <source ref="3"/>
</evidence>
<evidence type="ECO:0000303" key="8">
    <source>
    </source>
</evidence>
<evidence type="ECO:0000303" key="9">
    <source>
    </source>
</evidence>
<evidence type="ECO:0000303" key="10">
    <source>
    </source>
</evidence>
<evidence type="ECO:0000305" key="11"/>
<evidence type="ECO:0000305" key="12">
    <source>
    </source>
</evidence>
<evidence type="ECO:0007744" key="13">
    <source>
        <dbReference type="PDB" id="7MQ8"/>
    </source>
</evidence>
<evidence type="ECO:0007744" key="14">
    <source>
        <dbReference type="PDB" id="7MQ9"/>
    </source>
</evidence>
<evidence type="ECO:0007744" key="15">
    <source>
        <dbReference type="PDB" id="7MQA"/>
    </source>
</evidence>
<evidence type="ECO:0007744" key="16">
    <source>
    </source>
</evidence>
<evidence type="ECO:0007744" key="17">
    <source>
    </source>
</evidence>
<evidence type="ECO:0007829" key="18">
    <source>
        <dbReference type="PDB" id="5FAI"/>
    </source>
</evidence>
<dbReference type="EC" id="2.1.1.-" evidence="5"/>
<dbReference type="EMBL" id="U47924">
    <property type="protein sequence ID" value="AAB51325.1"/>
    <property type="status" value="ALT_INIT"/>
    <property type="molecule type" value="Genomic_DNA"/>
</dbReference>
<dbReference type="EMBL" id="U72514">
    <property type="protein sequence ID" value="AAC51641.1"/>
    <property type="molecule type" value="mRNA"/>
</dbReference>
<dbReference type="EMBL" id="BC055314">
    <property type="protein sequence ID" value="AAH55314.1"/>
    <property type="molecule type" value="mRNA"/>
</dbReference>
<dbReference type="CCDS" id="CCDS73430.1"/>
<dbReference type="RefSeq" id="NP_001306978.1">
    <property type="nucleotide sequence ID" value="NM_001320049.1"/>
</dbReference>
<dbReference type="RefSeq" id="NP_006322.4">
    <property type="nucleotide sequence ID" value="NM_006331.7"/>
</dbReference>
<dbReference type="PDB" id="5FAI">
    <property type="method" value="X-ray"/>
    <property type="resolution" value="1.80 A"/>
    <property type="chains" value="A=14-244"/>
</dbReference>
<dbReference type="PDB" id="7MQ8">
    <property type="method" value="EM"/>
    <property type="resolution" value="3.60 A"/>
    <property type="chains" value="SJ/SK=1-244"/>
</dbReference>
<dbReference type="PDB" id="7MQ9">
    <property type="method" value="EM"/>
    <property type="resolution" value="3.87 A"/>
    <property type="chains" value="SJ/SK=1-244"/>
</dbReference>
<dbReference type="PDB" id="7MQA">
    <property type="method" value="EM"/>
    <property type="resolution" value="2.70 A"/>
    <property type="chains" value="SJ/SK=1-244"/>
</dbReference>
<dbReference type="PDBsum" id="5FAI"/>
<dbReference type="PDBsum" id="7MQ8"/>
<dbReference type="PDBsum" id="7MQ9"/>
<dbReference type="PDBsum" id="7MQA"/>
<dbReference type="EMDB" id="EMD-23936"/>
<dbReference type="EMDB" id="EMD-23937"/>
<dbReference type="EMDB" id="EMD-23938"/>
<dbReference type="SMR" id="Q92979"/>
<dbReference type="BioGRID" id="115703">
    <property type="interactions" value="126"/>
</dbReference>
<dbReference type="ComplexPortal" id="CPX-2511">
    <property type="entry name" value="Small ribosomal subunit processome"/>
</dbReference>
<dbReference type="FunCoup" id="Q92979">
    <property type="interactions" value="3211"/>
</dbReference>
<dbReference type="IntAct" id="Q92979">
    <property type="interactions" value="45"/>
</dbReference>
<dbReference type="MINT" id="Q92979"/>
<dbReference type="STRING" id="9606.ENSP00000470560"/>
<dbReference type="BindingDB" id="Q92979"/>
<dbReference type="GlyGen" id="Q92979">
    <property type="glycosylation" value="1 site, 1 O-linked glycan (1 site)"/>
</dbReference>
<dbReference type="iPTMnet" id="Q92979"/>
<dbReference type="PhosphoSitePlus" id="Q92979"/>
<dbReference type="SwissPalm" id="Q92979"/>
<dbReference type="BioMuta" id="EMG1"/>
<dbReference type="DMDM" id="20532172"/>
<dbReference type="jPOST" id="Q92979"/>
<dbReference type="MassIVE" id="Q92979"/>
<dbReference type="PaxDb" id="9606-ENSP00000470560"/>
<dbReference type="PeptideAtlas" id="Q92979"/>
<dbReference type="ProteomicsDB" id="75641"/>
<dbReference type="Pumba" id="Q92979"/>
<dbReference type="Antibodypedia" id="6124">
    <property type="antibodies" value="188 antibodies from 24 providers"/>
</dbReference>
<dbReference type="DNASU" id="10436"/>
<dbReference type="Ensembl" id="ENST00000599672.6">
    <property type="protein sequence ID" value="ENSP00000470560.1"/>
    <property type="gene ID" value="ENSG00000126749.17"/>
</dbReference>
<dbReference type="GeneID" id="10436"/>
<dbReference type="KEGG" id="hsa:10436"/>
<dbReference type="MANE-Select" id="ENST00000599672.6">
    <property type="protein sequence ID" value="ENSP00000470560.1"/>
    <property type="RefSeq nucleotide sequence ID" value="NM_006331.8"/>
    <property type="RefSeq protein sequence ID" value="NP_006322.4"/>
</dbReference>
<dbReference type="UCSC" id="uc031ysa.2">
    <property type="organism name" value="human"/>
</dbReference>
<dbReference type="AGR" id="HGNC:16912"/>
<dbReference type="CTD" id="10436"/>
<dbReference type="DisGeNET" id="10436"/>
<dbReference type="GeneCards" id="EMG1"/>
<dbReference type="HGNC" id="HGNC:16912">
    <property type="gene designation" value="EMG1"/>
</dbReference>
<dbReference type="HPA" id="ENSG00000126749">
    <property type="expression patterns" value="Low tissue specificity"/>
</dbReference>
<dbReference type="MalaCards" id="EMG1"/>
<dbReference type="MIM" id="211180">
    <property type="type" value="phenotype"/>
</dbReference>
<dbReference type="MIM" id="611531">
    <property type="type" value="gene"/>
</dbReference>
<dbReference type="neXtProt" id="NX_Q92979"/>
<dbReference type="OpenTargets" id="ENSG00000126749"/>
<dbReference type="Orphanet" id="1270">
    <property type="disease" value="Bowen-Conradi syndrome"/>
</dbReference>
<dbReference type="PharmGKB" id="PA142671909"/>
<dbReference type="VEuPathDB" id="HostDB:ENSG00000126749"/>
<dbReference type="eggNOG" id="KOG3073">
    <property type="taxonomic scope" value="Eukaryota"/>
</dbReference>
<dbReference type="GeneTree" id="ENSGT00390000000305"/>
<dbReference type="HOGENOM" id="CLU_055846_1_1_1"/>
<dbReference type="InParanoid" id="Q92979"/>
<dbReference type="OMA" id="ECKFSND"/>
<dbReference type="OrthoDB" id="269804at2759"/>
<dbReference type="PAN-GO" id="Q92979">
    <property type="GO annotations" value="5 GO annotations based on evolutionary models"/>
</dbReference>
<dbReference type="PhylomeDB" id="Q92979"/>
<dbReference type="BRENDA" id="2.1.1.257">
    <property type="organism ID" value="2681"/>
</dbReference>
<dbReference type="PathwayCommons" id="Q92979"/>
<dbReference type="Reactome" id="R-HSA-6790901">
    <property type="pathway name" value="rRNA modification in the nucleus and cytosol"/>
</dbReference>
<dbReference type="Reactome" id="R-HSA-6791226">
    <property type="pathway name" value="Major pathway of rRNA processing in the nucleolus and cytosol"/>
</dbReference>
<dbReference type="SignaLink" id="Q92979"/>
<dbReference type="BioGRID-ORCS" id="10436">
    <property type="hits" value="54 hits in 293 CRISPR screens"/>
</dbReference>
<dbReference type="CD-CODE" id="91857CE7">
    <property type="entry name" value="Nucleolus"/>
</dbReference>
<dbReference type="ChiTaRS" id="EMG1">
    <property type="organism name" value="human"/>
</dbReference>
<dbReference type="EvolutionaryTrace" id="Q92979"/>
<dbReference type="GeneWiki" id="EMG1"/>
<dbReference type="GenomeRNAi" id="10436"/>
<dbReference type="Pharos" id="Q92979">
    <property type="development level" value="Tbio"/>
</dbReference>
<dbReference type="PRO" id="PR:Q92979"/>
<dbReference type="Proteomes" id="UP000005640">
    <property type="component" value="Chromosome 12"/>
</dbReference>
<dbReference type="RNAct" id="Q92979">
    <property type="molecule type" value="protein"/>
</dbReference>
<dbReference type="Bgee" id="ENSG00000126749">
    <property type="expression patterns" value="Expressed in islet of Langerhans and 195 other cell types or tissues"/>
</dbReference>
<dbReference type="ExpressionAtlas" id="Q92979">
    <property type="expression patterns" value="baseline and differential"/>
</dbReference>
<dbReference type="GO" id="GO:0005694">
    <property type="term" value="C:chromosome"/>
    <property type="evidence" value="ECO:0000314"/>
    <property type="project" value="HPA"/>
</dbReference>
<dbReference type="GO" id="GO:0005737">
    <property type="term" value="C:cytoplasm"/>
    <property type="evidence" value="ECO:0000250"/>
    <property type="project" value="UniProtKB"/>
</dbReference>
<dbReference type="GO" id="GO:0005730">
    <property type="term" value="C:nucleolus"/>
    <property type="evidence" value="ECO:0000314"/>
    <property type="project" value="HPA"/>
</dbReference>
<dbReference type="GO" id="GO:0005654">
    <property type="term" value="C:nucleoplasm"/>
    <property type="evidence" value="ECO:0000314"/>
    <property type="project" value="HPA"/>
</dbReference>
<dbReference type="GO" id="GO:0005634">
    <property type="term" value="C:nucleus"/>
    <property type="evidence" value="ECO:0000250"/>
    <property type="project" value="UniProtKB"/>
</dbReference>
<dbReference type="GO" id="GO:0032040">
    <property type="term" value="C:small-subunit processome"/>
    <property type="evidence" value="ECO:0000314"/>
    <property type="project" value="UniProtKB"/>
</dbReference>
<dbReference type="GO" id="GO:0042802">
    <property type="term" value="F:identical protein binding"/>
    <property type="evidence" value="ECO:0000353"/>
    <property type="project" value="IntAct"/>
</dbReference>
<dbReference type="GO" id="GO:0003723">
    <property type="term" value="F:RNA binding"/>
    <property type="evidence" value="ECO:0007005"/>
    <property type="project" value="UniProtKB"/>
</dbReference>
<dbReference type="GO" id="GO:0070037">
    <property type="term" value="F:rRNA (pseudouridine) methyltransferase activity"/>
    <property type="evidence" value="ECO:0000314"/>
    <property type="project" value="UniProtKB"/>
</dbReference>
<dbReference type="GO" id="GO:0019843">
    <property type="term" value="F:rRNA binding"/>
    <property type="evidence" value="ECO:0000318"/>
    <property type="project" value="GO_Central"/>
</dbReference>
<dbReference type="GO" id="GO:0001824">
    <property type="term" value="P:blastocyst development"/>
    <property type="evidence" value="ECO:0007669"/>
    <property type="project" value="Ensembl"/>
</dbReference>
<dbReference type="GO" id="GO:0017126">
    <property type="term" value="P:nucleologenesis"/>
    <property type="evidence" value="ECO:0007669"/>
    <property type="project" value="Ensembl"/>
</dbReference>
<dbReference type="GO" id="GO:0042274">
    <property type="term" value="P:ribosomal small subunit biogenesis"/>
    <property type="evidence" value="ECO:0000314"/>
    <property type="project" value="UniProtKB"/>
</dbReference>
<dbReference type="GO" id="GO:0070475">
    <property type="term" value="P:rRNA base methylation"/>
    <property type="evidence" value="ECO:0000318"/>
    <property type="project" value="GO_Central"/>
</dbReference>
<dbReference type="GO" id="GO:0006364">
    <property type="term" value="P:rRNA processing"/>
    <property type="evidence" value="ECO:0000250"/>
    <property type="project" value="UniProtKB"/>
</dbReference>
<dbReference type="CDD" id="cd18088">
    <property type="entry name" value="Nep1-like"/>
    <property type="match status" value="1"/>
</dbReference>
<dbReference type="FunFam" id="3.40.1280.10:FF:000003">
    <property type="entry name" value="Ribosomal RNA small subunit methyltransferase"/>
    <property type="match status" value="1"/>
</dbReference>
<dbReference type="Gene3D" id="3.40.1280.10">
    <property type="match status" value="1"/>
</dbReference>
<dbReference type="InterPro" id="IPR029028">
    <property type="entry name" value="Alpha/beta_knot_MTases"/>
</dbReference>
<dbReference type="InterPro" id="IPR005304">
    <property type="entry name" value="Rbsml_bgen_MeTrfase_EMG1/NEP1"/>
</dbReference>
<dbReference type="InterPro" id="IPR029026">
    <property type="entry name" value="tRNA_m1G_MTases_N"/>
</dbReference>
<dbReference type="PANTHER" id="PTHR12636">
    <property type="entry name" value="NEP1/MRA1"/>
    <property type="match status" value="1"/>
</dbReference>
<dbReference type="PANTHER" id="PTHR12636:SF5">
    <property type="entry name" value="RIBOSOMAL RNA SMALL SUBUNIT METHYLTRANSFERASE NEP1"/>
    <property type="match status" value="1"/>
</dbReference>
<dbReference type="Pfam" id="PF03587">
    <property type="entry name" value="EMG1"/>
    <property type="match status" value="1"/>
</dbReference>
<dbReference type="SUPFAM" id="SSF75217">
    <property type="entry name" value="alpha/beta knot"/>
    <property type="match status" value="1"/>
</dbReference>
<sequence>MAAPSDGFKPRERSGGEQAQDWDALPPKRPRLGAGNKIGGRRLIVVLEGASLETVKVGKTYELLNCDKHKSILLKNGRDPGEARPDITHQSLLMLMDSPLNRAGLLQVYIHTQKNVLIEVNPQTRIPRTFDRFCGLMVQLLHKLSVRAADGPQKLLKVIKNPVSDHFPVGCMKVGTSFSIPVVSDVRELVPSSDPIVFVVGAFAHGKVSVEYTEKMVSISNYPLSAALTCAKLTTAFEEVWGVI</sequence>
<gene>
    <name evidence="8" type="primary">EMG1</name>
    <name evidence="10" type="synonym">C2F</name>
</gene>
<name>NEP1_HUMAN</name>
<reference key="1">
    <citation type="journal article" date="1997" name="Genome Res.">
        <title>Large-scale sequencing in human chromosome 12p13: experimental and computational gene structure determination.</title>
        <authorList>
            <person name="Ansari-Lari M.A."/>
            <person name="Shen Y."/>
            <person name="Muzny D.M."/>
            <person name="Lee W."/>
            <person name="Gibbs R.A."/>
        </authorList>
    </citation>
    <scope>NUCLEOTIDE SEQUENCE [GENOMIC DNA / MRNA]</scope>
</reference>
<reference key="2">
    <citation type="journal article" date="2004" name="Genome Res.">
        <title>The status, quality, and expansion of the NIH full-length cDNA project: the Mammalian Gene Collection (MGC).</title>
        <authorList>
            <consortium name="The MGC Project Team"/>
        </authorList>
    </citation>
    <scope>NUCLEOTIDE SEQUENCE [LARGE SCALE MRNA]</scope>
    <source>
        <tissue>Testis</tissue>
    </source>
</reference>
<reference key="3">
    <citation type="submission" date="2004-10" db="UniProtKB">
        <authorList>
            <person name="Bienvenut W.V."/>
        </authorList>
    </citation>
    <scope>PROTEIN SEQUENCE OF 2-11</scope>
    <scope>CLEAVAGE OF INITIATOR METHIONINE</scope>
    <scope>ACETYLATION AT ALA-2</scope>
    <scope>IDENTIFICATION BY MASS SPECTROMETRY</scope>
    <source>
        <tissue>Cervix carcinoma</tissue>
    </source>
</reference>
<reference key="4">
    <citation type="journal article" date="2002" name="Curr. Genet.">
        <title>Nep1p (Emg1p), a novel protein conserved in eukaryotes and archaea, is involved in ribosome biogenesis.</title>
        <authorList>
            <person name="Eschrich D."/>
            <person name="Buchhaupt M."/>
            <person name="Koetter P."/>
            <person name="Entian K.-D."/>
        </authorList>
    </citation>
    <scope>SUBCELLULAR LOCATION</scope>
</reference>
<reference key="5">
    <citation type="journal article" date="2010" name="Nucleic Acids Res.">
        <title>The ribosome assembly factor Nep1 responsible for Bowen-Conradi syndrome is a pseudouridine-N1-specific methyltransferase.</title>
        <authorList>
            <person name="Wurm J.P."/>
            <person name="Meyer B."/>
            <person name="Bahr U."/>
            <person name="Held M."/>
            <person name="Frolow O."/>
            <person name="Kotter P."/>
            <person name="Engels J.W."/>
            <person name="Heckel A."/>
            <person name="Karas M."/>
            <person name="Entian K.D."/>
            <person name="Wohnert J."/>
        </authorList>
    </citation>
    <scope>FUNCTION</scope>
    <scope>CATALYTIC ACTIVITY</scope>
</reference>
<reference key="6">
    <citation type="journal article" date="2011" name="BMC Syst. Biol.">
        <title>Initial characterization of the human central proteome.</title>
        <authorList>
            <person name="Burkard T.R."/>
            <person name="Planyavsky M."/>
            <person name="Kaupe I."/>
            <person name="Breitwieser F.P."/>
            <person name="Buerckstuemmer T."/>
            <person name="Bennett K.L."/>
            <person name="Superti-Furga G."/>
            <person name="Colinge J."/>
        </authorList>
    </citation>
    <scope>IDENTIFICATION BY MASS SPECTROMETRY [LARGE SCALE ANALYSIS]</scope>
</reference>
<reference key="7">
    <citation type="journal article" date="2012" name="Proc. Natl. Acad. Sci. U.S.A.">
        <title>N-terminal acetylome analyses and functional insights of the N-terminal acetyltransferase NatB.</title>
        <authorList>
            <person name="Van Damme P."/>
            <person name="Lasa M."/>
            <person name="Polevoda B."/>
            <person name="Gazquez C."/>
            <person name="Elosegui-Artola A."/>
            <person name="Kim D.S."/>
            <person name="De Juan-Pardo E."/>
            <person name="Demeyer K."/>
            <person name="Hole K."/>
            <person name="Larrea E."/>
            <person name="Timmerman E."/>
            <person name="Prieto J."/>
            <person name="Arnesen T."/>
            <person name="Sherman F."/>
            <person name="Gevaert K."/>
            <person name="Aldabe R."/>
        </authorList>
    </citation>
    <scope>ACETYLATION [LARGE SCALE ANALYSIS] AT ALA-2</scope>
    <scope>CLEAVAGE OF INITIATOR METHIONINE [LARGE SCALE ANALYSIS]</scope>
    <scope>IDENTIFICATION BY MASS SPECTROMETRY [LARGE SCALE ANALYSIS]</scope>
</reference>
<reference key="8">
    <citation type="journal article" date="2013" name="J. Proteome Res.">
        <title>Toward a comprehensive characterization of a human cancer cell phosphoproteome.</title>
        <authorList>
            <person name="Zhou H."/>
            <person name="Di Palma S."/>
            <person name="Preisinger C."/>
            <person name="Peng M."/>
            <person name="Polat A.N."/>
            <person name="Heck A.J."/>
            <person name="Mohammed S."/>
        </authorList>
    </citation>
    <scope>PHOSPHORYLATION [LARGE SCALE ANALYSIS] AT SER-5 AND SER-14</scope>
    <scope>IDENTIFICATION BY MASS SPECTROMETRY [LARGE SCALE ANALYSIS]</scope>
    <source>
        <tissue>Cervix carcinoma</tissue>
        <tissue>Erythroleukemia</tissue>
    </source>
</reference>
<reference evidence="13 14 15" key="9">
    <citation type="journal article" date="2021" name="Science">
        <title>Nucleolar maturation of the human small subunit processome.</title>
        <authorList>
            <person name="Singh S."/>
            <person name="Vanden Broeck A."/>
            <person name="Miller L."/>
            <person name="Chaker-Margot M."/>
            <person name="Klinge S."/>
        </authorList>
    </citation>
    <scope>STRUCTURE BY ELECTRON MICROSCOPY (2.70 ANGSTROMS)</scope>
    <scope>FUNCTION</scope>
    <scope>SUBUNIT</scope>
    <scope>SUBCELLULAR LOCATION</scope>
</reference>
<reference key="10">
    <citation type="journal article" date="2009" name="Am. J. Hum. Genet.">
        <title>Mutation of a gene essential for ribosome biogenesis, EMG1, causes Bowen-Conradi syndrome.</title>
        <authorList>
            <person name="Armistead J."/>
            <person name="Khatkar S."/>
            <person name="Meyer B."/>
            <person name="Mark B.L."/>
            <person name="Patel N."/>
            <person name="Coghlan G."/>
            <person name="Lamont R.E."/>
            <person name="Liu S."/>
            <person name="Wiechert J."/>
            <person name="Cattini P.A."/>
            <person name="Koetter P."/>
            <person name="Wrogemann K."/>
            <person name="Greenberg C.R."/>
            <person name="Entian K.-D."/>
            <person name="Zelinski T."/>
            <person name="Triggs-Raine B."/>
        </authorList>
    </citation>
    <scope>VARIANT BWCNS GLY-86</scope>
    <scope>CHARACTERIZATION OF VARIANT BWCNS GLY-86</scope>
</reference>
<accession>Q92979</accession>
<accession>O00675</accession>
<accession>O00726</accession>
<organism>
    <name type="scientific">Homo sapiens</name>
    <name type="common">Human</name>
    <dbReference type="NCBI Taxonomy" id="9606"/>
    <lineage>
        <taxon>Eukaryota</taxon>
        <taxon>Metazoa</taxon>
        <taxon>Chordata</taxon>
        <taxon>Craniata</taxon>
        <taxon>Vertebrata</taxon>
        <taxon>Euteleostomi</taxon>
        <taxon>Mammalia</taxon>
        <taxon>Eutheria</taxon>
        <taxon>Euarchontoglires</taxon>
        <taxon>Primates</taxon>
        <taxon>Haplorrhini</taxon>
        <taxon>Catarrhini</taxon>
        <taxon>Hominidae</taxon>
        <taxon>Homo</taxon>
    </lineage>
</organism>